<feature type="chain" id="PRO_1000146750" description="p-hydroxybenzoic acid efflux pump subunit AaeB">
    <location>
        <begin position="1"/>
        <end position="651"/>
    </location>
</feature>
<feature type="transmembrane region" description="Helical" evidence="1">
    <location>
        <begin position="11"/>
        <end position="31"/>
    </location>
</feature>
<feature type="transmembrane region" description="Helical" evidence="1">
    <location>
        <begin position="41"/>
        <end position="61"/>
    </location>
</feature>
<feature type="transmembrane region" description="Helical" evidence="1">
    <location>
        <begin position="67"/>
        <end position="87"/>
    </location>
</feature>
<feature type="transmembrane region" description="Helical" evidence="1">
    <location>
        <begin position="91"/>
        <end position="111"/>
    </location>
</feature>
<feature type="transmembrane region" description="Helical" evidence="1">
    <location>
        <begin position="119"/>
        <end position="139"/>
    </location>
</feature>
<feature type="transmembrane region" description="Helical" evidence="1">
    <location>
        <begin position="150"/>
        <end position="170"/>
    </location>
</feature>
<feature type="transmembrane region" description="Helical" evidence="1">
    <location>
        <begin position="368"/>
        <end position="388"/>
    </location>
</feature>
<feature type="transmembrane region" description="Helical" evidence="1">
    <location>
        <begin position="405"/>
        <end position="425"/>
    </location>
</feature>
<feature type="transmembrane region" description="Helical" evidence="1">
    <location>
        <begin position="429"/>
        <end position="449"/>
    </location>
</feature>
<feature type="transmembrane region" description="Helical" evidence="1">
    <location>
        <begin position="455"/>
        <end position="475"/>
    </location>
</feature>
<feature type="transmembrane region" description="Helical" evidence="1">
    <location>
        <begin position="481"/>
        <end position="501"/>
    </location>
</feature>
<keyword id="KW-0997">Cell inner membrane</keyword>
<keyword id="KW-1003">Cell membrane</keyword>
<keyword id="KW-0472">Membrane</keyword>
<keyword id="KW-0812">Transmembrane</keyword>
<keyword id="KW-1133">Transmembrane helix</keyword>
<keyword id="KW-0813">Transport</keyword>
<comment type="function">
    <text evidence="1">Forms an efflux pump with AaeA. Could function as a metabolic relief valve, allowing to eliminate certain compounds when they accumulate to high levels in the cell.</text>
</comment>
<comment type="subcellular location">
    <subcellularLocation>
        <location evidence="1">Cell inner membrane</location>
        <topology evidence="1">Multi-pass membrane protein</topology>
    </subcellularLocation>
</comment>
<comment type="similarity">
    <text evidence="1">Belongs to the aromatic acid exporter ArAE (TC 2.A.85) family.</text>
</comment>
<protein>
    <recommendedName>
        <fullName evidence="1">p-hydroxybenzoic acid efflux pump subunit AaeB</fullName>
        <shortName evidence="1">pHBA efflux pump protein B</shortName>
    </recommendedName>
</protein>
<name>AAEB_YERPG</name>
<reference key="1">
    <citation type="journal article" date="2010" name="J. Bacteriol.">
        <title>Genome sequence of the deep-rooted Yersinia pestis strain Angola reveals new insights into the evolution and pangenome of the plague bacterium.</title>
        <authorList>
            <person name="Eppinger M."/>
            <person name="Worsham P.L."/>
            <person name="Nikolich M.P."/>
            <person name="Riley D.R."/>
            <person name="Sebastian Y."/>
            <person name="Mou S."/>
            <person name="Achtman M."/>
            <person name="Lindler L.E."/>
            <person name="Ravel J."/>
        </authorList>
    </citation>
    <scope>NUCLEOTIDE SEQUENCE [LARGE SCALE GENOMIC DNA]</scope>
    <source>
        <strain>Angola</strain>
    </source>
</reference>
<sequence length="651" mass="72437">MTHPSFIRLRFAFKLSFAIVAALFLGFHLQLETPRWSVLTAAIVSAGPAFAAGGEPFSGAIRHRGWLRIIGTFIGCIGGLVIIVLTIRAPVLTLMLCCLWAGICTWISSLVRVENSYAFGLAGYTALIIIVTTGETPLLTPQFAVERCSEIVLGIVCAVMADLLFSPRSIKQDIDRLVDKVLVDQYRLLQLCIQPAEKSEIDRAWNELVKNTTSLNGMRSYLMMESSRWQRCNRRLQVLHTESLALITQACETYLVMSNHPEVISAELKTMLSEPAQTPAEIHQQMKKLRQFIAASHSEAIPHTISSWVGAATRYLLLSKGIQTNSSINQVEEDILAGDAPVKPISAEGHHAMINGLRTGIATAIGGLFWLWTGWTSGAGCMVMIAVVTSLAMRTPNPRRMALDFLVGVIIALPIGALYFMFIIPSTQQSMLLLCISLGVLAFIIGIEVQKRRLGSLGTLASTINIIVLSNPMIFNVRQFLDSALGQIVGCFVSLIVLLLIRDNAKDRTGRTLLNRFVYSAVSALTTNKTKRGENHLPALYQQLNQLLMMFPADIDKYRLALTLIIAHQRLNRTEIPVNAELSAFHKQIRSTAERVITVNNDQKRRYYFARLLQELDQYQQKLVDYQAADAVIRPVKRLTEMLRKYQSALI</sequence>
<proteinExistence type="inferred from homology"/>
<dbReference type="EMBL" id="CP000901">
    <property type="protein sequence ID" value="ABX87200.1"/>
    <property type="molecule type" value="Genomic_DNA"/>
</dbReference>
<dbReference type="RefSeq" id="WP_002210095.1">
    <property type="nucleotide sequence ID" value="NZ_CP009935.1"/>
</dbReference>
<dbReference type="SMR" id="A9R1V8"/>
<dbReference type="GeneID" id="57975111"/>
<dbReference type="KEGG" id="ypg:YpAngola_A1175"/>
<dbReference type="PATRIC" id="fig|349746.12.peg.2127"/>
<dbReference type="GO" id="GO:0005886">
    <property type="term" value="C:plasma membrane"/>
    <property type="evidence" value="ECO:0007669"/>
    <property type="project" value="UniProtKB-SubCell"/>
</dbReference>
<dbReference type="GO" id="GO:0022857">
    <property type="term" value="F:transmembrane transporter activity"/>
    <property type="evidence" value="ECO:0007669"/>
    <property type="project" value="UniProtKB-UniRule"/>
</dbReference>
<dbReference type="GO" id="GO:0046942">
    <property type="term" value="P:carboxylic acid transport"/>
    <property type="evidence" value="ECO:0007669"/>
    <property type="project" value="InterPro"/>
</dbReference>
<dbReference type="HAMAP" id="MF_01545">
    <property type="entry name" value="AaeB"/>
    <property type="match status" value="1"/>
</dbReference>
<dbReference type="InterPro" id="IPR006726">
    <property type="entry name" value="PHBA_efflux_AaeB/fusaric-R"/>
</dbReference>
<dbReference type="InterPro" id="IPR023706">
    <property type="entry name" value="PHBA_efflux_pump_AaeB"/>
</dbReference>
<dbReference type="NCBIfam" id="NF007916">
    <property type="entry name" value="PRK10631.1"/>
    <property type="match status" value="1"/>
</dbReference>
<dbReference type="PANTHER" id="PTHR30509:SF9">
    <property type="entry name" value="MULTIDRUG RESISTANCE PROTEIN MDTO"/>
    <property type="match status" value="1"/>
</dbReference>
<dbReference type="PANTHER" id="PTHR30509">
    <property type="entry name" value="P-HYDROXYBENZOIC ACID EFFLUX PUMP SUBUNIT-RELATED"/>
    <property type="match status" value="1"/>
</dbReference>
<dbReference type="Pfam" id="PF04632">
    <property type="entry name" value="FUSC"/>
    <property type="match status" value="1"/>
</dbReference>
<gene>
    <name evidence="1" type="primary">aaeB</name>
    <name type="ordered locus">YpAngola_A1175</name>
</gene>
<evidence type="ECO:0000255" key="1">
    <source>
        <dbReference type="HAMAP-Rule" id="MF_01545"/>
    </source>
</evidence>
<accession>A9R1V8</accession>
<organism>
    <name type="scientific">Yersinia pestis bv. Antiqua (strain Angola)</name>
    <dbReference type="NCBI Taxonomy" id="349746"/>
    <lineage>
        <taxon>Bacteria</taxon>
        <taxon>Pseudomonadati</taxon>
        <taxon>Pseudomonadota</taxon>
        <taxon>Gammaproteobacteria</taxon>
        <taxon>Enterobacterales</taxon>
        <taxon>Yersiniaceae</taxon>
        <taxon>Yersinia</taxon>
    </lineage>
</organism>